<dbReference type="EMBL" id="U52367">
    <property type="protein sequence ID" value="AAB50193.1"/>
    <property type="molecule type" value="Genomic_DNA"/>
</dbReference>
<dbReference type="EMBL" id="AF101055">
    <property type="protein sequence ID" value="AAD16422.1"/>
    <property type="molecule type" value="Genomic_DNA"/>
</dbReference>
<dbReference type="EMBL" id="AE001437">
    <property type="protein sequence ID" value="AAK80812.1"/>
    <property type="molecule type" value="Genomic_DNA"/>
</dbReference>
<dbReference type="PIR" id="A97253">
    <property type="entry name" value="A97253"/>
</dbReference>
<dbReference type="RefSeq" id="NP_349472.1">
    <property type="nucleotide sequence ID" value="NC_003030.1"/>
</dbReference>
<dbReference type="RefSeq" id="WP_010966153.1">
    <property type="nucleotide sequence ID" value="NC_003030.1"/>
</dbReference>
<dbReference type="SMR" id="O05098"/>
<dbReference type="STRING" id="272562.CA_C2869"/>
<dbReference type="KEGG" id="cac:CA_C2869"/>
<dbReference type="PATRIC" id="fig|272562.8.peg.3053"/>
<dbReference type="eggNOG" id="COG0711">
    <property type="taxonomic scope" value="Bacteria"/>
</dbReference>
<dbReference type="HOGENOM" id="CLU_079215_4_0_9"/>
<dbReference type="OrthoDB" id="9795863at2"/>
<dbReference type="Proteomes" id="UP000000814">
    <property type="component" value="Chromosome"/>
</dbReference>
<dbReference type="GO" id="GO:0005886">
    <property type="term" value="C:plasma membrane"/>
    <property type="evidence" value="ECO:0007669"/>
    <property type="project" value="UniProtKB-SubCell"/>
</dbReference>
<dbReference type="GO" id="GO:0045259">
    <property type="term" value="C:proton-transporting ATP synthase complex"/>
    <property type="evidence" value="ECO:0007669"/>
    <property type="project" value="UniProtKB-KW"/>
</dbReference>
<dbReference type="GO" id="GO:0046933">
    <property type="term" value="F:proton-transporting ATP synthase activity, rotational mechanism"/>
    <property type="evidence" value="ECO:0007669"/>
    <property type="project" value="UniProtKB-UniRule"/>
</dbReference>
<dbReference type="GO" id="GO:0046961">
    <property type="term" value="F:proton-transporting ATPase activity, rotational mechanism"/>
    <property type="evidence" value="ECO:0007669"/>
    <property type="project" value="TreeGrafter"/>
</dbReference>
<dbReference type="CDD" id="cd06503">
    <property type="entry name" value="ATP-synt_Fo_b"/>
    <property type="match status" value="1"/>
</dbReference>
<dbReference type="HAMAP" id="MF_01398">
    <property type="entry name" value="ATP_synth_b_bprime"/>
    <property type="match status" value="1"/>
</dbReference>
<dbReference type="InterPro" id="IPR028987">
    <property type="entry name" value="ATP_synth_B-like_membr_sf"/>
</dbReference>
<dbReference type="InterPro" id="IPR002146">
    <property type="entry name" value="ATP_synth_b/b'su_bac/chlpt"/>
</dbReference>
<dbReference type="InterPro" id="IPR005864">
    <property type="entry name" value="ATP_synth_F0_bsu_bac"/>
</dbReference>
<dbReference type="InterPro" id="IPR050059">
    <property type="entry name" value="ATP_synthase_B_chain"/>
</dbReference>
<dbReference type="NCBIfam" id="TIGR01144">
    <property type="entry name" value="ATP_synt_b"/>
    <property type="match status" value="1"/>
</dbReference>
<dbReference type="NCBIfam" id="NF009992">
    <property type="entry name" value="PRK13461.1"/>
    <property type="match status" value="1"/>
</dbReference>
<dbReference type="PANTHER" id="PTHR33445:SF1">
    <property type="entry name" value="ATP SYNTHASE SUBUNIT B"/>
    <property type="match status" value="1"/>
</dbReference>
<dbReference type="PANTHER" id="PTHR33445">
    <property type="entry name" value="ATP SYNTHASE SUBUNIT B', CHLOROPLASTIC"/>
    <property type="match status" value="1"/>
</dbReference>
<dbReference type="Pfam" id="PF00430">
    <property type="entry name" value="ATP-synt_B"/>
    <property type="match status" value="1"/>
</dbReference>
<dbReference type="SUPFAM" id="SSF81573">
    <property type="entry name" value="F1F0 ATP synthase subunit B, membrane domain"/>
    <property type="match status" value="1"/>
</dbReference>
<accession>O05098</accession>
<gene>
    <name evidence="1" type="primary">atpF</name>
    <name type="synonym">atpB</name>
    <name type="ordered locus">CA_C2869</name>
</gene>
<proteinExistence type="inferred from homology"/>
<name>ATPF_CLOAB</name>
<comment type="function">
    <text evidence="1">F(1)F(0) ATP synthase produces ATP from ADP in the presence of a proton or sodium gradient. F-type ATPases consist of two structural domains, F(1) containing the extramembraneous catalytic core and F(0) containing the membrane proton channel, linked together by a central stalk and a peripheral stalk. During catalysis, ATP synthesis in the catalytic domain of F(1) is coupled via a rotary mechanism of the central stalk subunits to proton translocation.</text>
</comment>
<comment type="function">
    <text evidence="1">Component of the F(0) channel, it forms part of the peripheral stalk, linking F(1) to F(0).</text>
</comment>
<comment type="subunit">
    <text evidence="1">F-type ATPases have 2 components, F(1) - the catalytic core - and F(0) - the membrane proton channel. F(1) has five subunits: alpha(3), beta(3), gamma(1), delta(1), epsilon(1). F(0) has three main subunits: a(1), b(2) and c(10-14). The alpha and beta chains form an alternating ring which encloses part of the gamma chain. F(1) is attached to F(0) by a central stalk formed by the gamma and epsilon chains, while a peripheral stalk is formed by the delta and b chains.</text>
</comment>
<comment type="subcellular location">
    <subcellularLocation>
        <location evidence="1">Cell membrane</location>
        <topology evidence="1">Single-pass membrane protein</topology>
    </subcellularLocation>
</comment>
<comment type="similarity">
    <text evidence="1">Belongs to the ATPase B chain family.</text>
</comment>
<keyword id="KW-0066">ATP synthesis</keyword>
<keyword id="KW-1003">Cell membrane</keyword>
<keyword id="KW-0138">CF(0)</keyword>
<keyword id="KW-0375">Hydrogen ion transport</keyword>
<keyword id="KW-0406">Ion transport</keyword>
<keyword id="KW-0472">Membrane</keyword>
<keyword id="KW-1185">Reference proteome</keyword>
<keyword id="KW-0812">Transmembrane</keyword>
<keyword id="KW-1133">Transmembrane helix</keyword>
<keyword id="KW-0813">Transport</keyword>
<protein>
    <recommendedName>
        <fullName evidence="1">ATP synthase subunit b</fullName>
    </recommendedName>
    <alternativeName>
        <fullName evidence="1">ATP synthase F(0) sector subunit b</fullName>
    </alternativeName>
    <alternativeName>
        <fullName evidence="1">ATPase subunit I</fullName>
    </alternativeName>
    <alternativeName>
        <fullName evidence="1">F-type ATPase subunit b</fullName>
        <shortName evidence="1">F-ATPase subunit b</shortName>
    </alternativeName>
</protein>
<reference key="1">
    <citation type="submission" date="1996-03" db="EMBL/GenBank/DDBJ databases">
        <title>Cloning and sequencing of the F0 structural subunits a, c, and b of the F-type ATP synthases from Clostridium acetobutylicum.</title>
        <authorList>
            <person name="Belouski E."/>
            <person name="Bennett G.N."/>
        </authorList>
    </citation>
    <scope>NUCLEOTIDE SEQUENCE [GENOMIC DNA]</scope>
    <source>
        <strain>ATCC 824 / DSM 792 / JCM 1419 / IAM 19013 / LMG 5710 / NBRC 13948 / NRRL B-527 / VKM B-1787 / 2291 / W</strain>
    </source>
</reference>
<reference key="2">
    <citation type="journal article" date="2000" name="DNA Seq.">
        <title>Sequence analysis of the atp operon of Clostridium acetobutylicum DSM 792 encoding the F0F1 ATP synthase.</title>
        <authorList>
            <person name="Externbrink T."/>
            <person name="Hujer S."/>
            <person name="Winzer K."/>
            <person name="Duerre P."/>
        </authorList>
    </citation>
    <scope>NUCLEOTIDE SEQUENCE [GENOMIC DNA]</scope>
    <source>
        <strain>ATCC 824 / DSM 792 / JCM 1419 / IAM 19013 / LMG 5710 / NBRC 13948 / NRRL B-527 / VKM B-1787 / 2291 / W</strain>
    </source>
</reference>
<reference key="3">
    <citation type="journal article" date="2001" name="J. Bacteriol.">
        <title>Genome sequence and comparative analysis of the solvent-producing bacterium Clostridium acetobutylicum.</title>
        <authorList>
            <person name="Noelling J."/>
            <person name="Breton G."/>
            <person name="Omelchenko M.V."/>
            <person name="Makarova K.S."/>
            <person name="Zeng Q."/>
            <person name="Gibson R."/>
            <person name="Lee H.M."/>
            <person name="Dubois J."/>
            <person name="Qiu D."/>
            <person name="Hitti J."/>
            <person name="Wolf Y.I."/>
            <person name="Tatusov R.L."/>
            <person name="Sabathe F."/>
            <person name="Doucette-Stamm L.A."/>
            <person name="Soucaille P."/>
            <person name="Daly M.J."/>
            <person name="Bennett G.N."/>
            <person name="Koonin E.V."/>
            <person name="Smith D.R."/>
        </authorList>
    </citation>
    <scope>NUCLEOTIDE SEQUENCE [LARGE SCALE GENOMIC DNA]</scope>
    <source>
        <strain>ATCC 824 / DSM 792 / JCM 1419 / IAM 19013 / LMG 5710 / NBRC 13948 / NRRL B-527 / VKM B-1787 / 2291 / W</strain>
    </source>
</reference>
<organism>
    <name type="scientific">Clostridium acetobutylicum (strain ATCC 824 / DSM 792 / JCM 1419 / IAM 19013 / LMG 5710 / NBRC 13948 / NRRL B-527 / VKM B-1787 / 2291 / W)</name>
    <dbReference type="NCBI Taxonomy" id="272562"/>
    <lineage>
        <taxon>Bacteria</taxon>
        <taxon>Bacillati</taxon>
        <taxon>Bacillota</taxon>
        <taxon>Clostridia</taxon>
        <taxon>Eubacteriales</taxon>
        <taxon>Clostridiaceae</taxon>
        <taxon>Clostridium</taxon>
    </lineage>
</organism>
<evidence type="ECO:0000255" key="1">
    <source>
        <dbReference type="HAMAP-Rule" id="MF_01398"/>
    </source>
</evidence>
<sequence length="159" mass="18245">MEFNLVTIGFTIVNFIILMLILKHFFFDKVNKVIDDRNNEVALTIKKADAQNEEARLLKVESEKNLEDSKLQGKTIVENYKVKAEKVSEEITAEAKTEAQNILERAKRETQREKEKAEDEIKNQVVELAVLISSKALENSINEAEHRKLIEDFVSKVGI</sequence>
<feature type="chain" id="PRO_0000082370" description="ATP synthase subunit b">
    <location>
        <begin position="1"/>
        <end position="159"/>
    </location>
</feature>
<feature type="transmembrane region" description="Helical" evidence="1">
    <location>
        <begin position="2"/>
        <end position="22"/>
    </location>
</feature>